<proteinExistence type="inferred from homology"/>
<feature type="chain" id="PRO_0000210083" description="p-hydroxybenzoic acid efflux pump subunit AaeB">
    <location>
        <begin position="1"/>
        <end position="655"/>
    </location>
</feature>
<feature type="topological domain" description="Periplasmic" evidence="1">
    <location>
        <begin position="1"/>
        <end position="12"/>
    </location>
</feature>
<feature type="transmembrane region" description="Helical" evidence="2">
    <location>
        <begin position="13"/>
        <end position="33"/>
    </location>
</feature>
<feature type="topological domain" description="Cytoplasmic" evidence="1">
    <location>
        <begin position="34"/>
        <end position="37"/>
    </location>
</feature>
<feature type="transmembrane region" description="Helical" evidence="2">
    <location>
        <begin position="38"/>
        <end position="58"/>
    </location>
</feature>
<feature type="topological domain" description="Periplasmic" evidence="1">
    <location>
        <begin position="59"/>
        <end position="68"/>
    </location>
</feature>
<feature type="transmembrane region" description="Helical" evidence="2">
    <location>
        <begin position="69"/>
        <end position="89"/>
    </location>
</feature>
<feature type="topological domain" description="Cytoplasmic" evidence="1">
    <location>
        <begin position="90"/>
        <end position="92"/>
    </location>
</feature>
<feature type="transmembrane region" description="Helical" evidence="2">
    <location>
        <begin position="93"/>
        <end position="113"/>
    </location>
</feature>
<feature type="topological domain" description="Periplasmic" evidence="1">
    <location>
        <begin position="114"/>
        <end position="120"/>
    </location>
</feature>
<feature type="transmembrane region" description="Helical" evidence="2">
    <location>
        <begin position="121"/>
        <end position="141"/>
    </location>
</feature>
<feature type="topological domain" description="Cytoplasmic" evidence="1">
    <location>
        <begin position="142"/>
        <end position="151"/>
    </location>
</feature>
<feature type="transmembrane region" description="Helical" evidence="2">
    <location>
        <begin position="152"/>
        <end position="172"/>
    </location>
</feature>
<feature type="topological domain" description="Periplasmic" evidence="1">
    <location>
        <begin position="173"/>
        <end position="369"/>
    </location>
</feature>
<feature type="transmembrane region" description="Helical" evidence="2">
    <location>
        <begin position="370"/>
        <end position="390"/>
    </location>
</feature>
<feature type="topological domain" description="Cytoplasmic" evidence="1">
    <location>
        <begin position="391"/>
        <end position="406"/>
    </location>
</feature>
<feature type="transmembrane region" description="Helical" evidence="2">
    <location>
        <begin position="407"/>
        <end position="427"/>
    </location>
</feature>
<feature type="topological domain" description="Periplasmic" evidence="1">
    <location>
        <begin position="428"/>
        <end position="430"/>
    </location>
</feature>
<feature type="transmembrane region" description="Helical" evidence="2">
    <location>
        <begin position="431"/>
        <end position="451"/>
    </location>
</feature>
<feature type="topological domain" description="Cytoplasmic" evidence="1">
    <location>
        <begin position="452"/>
        <end position="459"/>
    </location>
</feature>
<feature type="transmembrane region" description="Helical" evidence="2">
    <location>
        <begin position="460"/>
        <end position="480"/>
    </location>
</feature>
<feature type="topological domain" description="Periplasmic" evidence="1">
    <location>
        <position position="481"/>
    </location>
</feature>
<feature type="transmembrane region" description="Helical" evidence="2">
    <location>
        <begin position="482"/>
        <end position="502"/>
    </location>
</feature>
<feature type="topological domain" description="Cytoplasmic" evidence="1">
    <location>
        <begin position="503"/>
        <end position="655"/>
    </location>
</feature>
<comment type="function">
    <text evidence="2">Forms an efflux pump with AaeA. Could function as a metabolic relief valve, allowing to eliminate certain compounds when they accumulate to high levels in the cell.</text>
</comment>
<comment type="subcellular location">
    <subcellularLocation>
        <location evidence="2">Cell inner membrane</location>
        <topology evidence="2">Multi-pass membrane protein</topology>
    </subcellularLocation>
</comment>
<comment type="similarity">
    <text evidence="2">Belongs to the aromatic acid exporter ArAE (TC 2.A.85) family.</text>
</comment>
<gene>
    <name evidence="2" type="primary">aaeB</name>
    <name type="ordered locus">STY3545</name>
    <name type="ordered locus">t3279</name>
</gene>
<accession>Q8Z3D8</accession>
<accession>Q7C6X9</accession>
<dbReference type="EMBL" id="AL513382">
    <property type="protein sequence ID" value="CAD07879.1"/>
    <property type="molecule type" value="Genomic_DNA"/>
</dbReference>
<dbReference type="EMBL" id="AE014613">
    <property type="protein sequence ID" value="AAO70814.1"/>
    <property type="molecule type" value="Genomic_DNA"/>
</dbReference>
<dbReference type="RefSeq" id="NP_457740.1">
    <property type="nucleotide sequence ID" value="NC_003198.1"/>
</dbReference>
<dbReference type="RefSeq" id="WP_000510909.1">
    <property type="nucleotide sequence ID" value="NZ_WSUR01000038.1"/>
</dbReference>
<dbReference type="SMR" id="Q8Z3D8"/>
<dbReference type="STRING" id="220341.gene:17587392"/>
<dbReference type="KEGG" id="stt:t3279"/>
<dbReference type="KEGG" id="sty:STY3545"/>
<dbReference type="PATRIC" id="fig|220341.7.peg.3608"/>
<dbReference type="eggNOG" id="COG1289">
    <property type="taxonomic scope" value="Bacteria"/>
</dbReference>
<dbReference type="HOGENOM" id="CLU_027647_0_0_6"/>
<dbReference type="OMA" id="RCTEICL"/>
<dbReference type="OrthoDB" id="9807111at2"/>
<dbReference type="Proteomes" id="UP000000541">
    <property type="component" value="Chromosome"/>
</dbReference>
<dbReference type="Proteomes" id="UP000002670">
    <property type="component" value="Chromosome"/>
</dbReference>
<dbReference type="GO" id="GO:0005886">
    <property type="term" value="C:plasma membrane"/>
    <property type="evidence" value="ECO:0007669"/>
    <property type="project" value="UniProtKB-SubCell"/>
</dbReference>
<dbReference type="GO" id="GO:0022857">
    <property type="term" value="F:transmembrane transporter activity"/>
    <property type="evidence" value="ECO:0007669"/>
    <property type="project" value="UniProtKB-UniRule"/>
</dbReference>
<dbReference type="GO" id="GO:0046942">
    <property type="term" value="P:carboxylic acid transport"/>
    <property type="evidence" value="ECO:0007669"/>
    <property type="project" value="InterPro"/>
</dbReference>
<dbReference type="HAMAP" id="MF_01545">
    <property type="entry name" value="AaeB"/>
    <property type="match status" value="1"/>
</dbReference>
<dbReference type="InterPro" id="IPR006726">
    <property type="entry name" value="PHBA_efflux_AaeB/fusaric-R"/>
</dbReference>
<dbReference type="InterPro" id="IPR023706">
    <property type="entry name" value="PHBA_efflux_pump_AaeB"/>
</dbReference>
<dbReference type="NCBIfam" id="NF007916">
    <property type="entry name" value="PRK10631.1"/>
    <property type="match status" value="1"/>
</dbReference>
<dbReference type="PANTHER" id="PTHR30509:SF9">
    <property type="entry name" value="MULTIDRUG RESISTANCE PROTEIN MDTO"/>
    <property type="match status" value="1"/>
</dbReference>
<dbReference type="PANTHER" id="PTHR30509">
    <property type="entry name" value="P-HYDROXYBENZOIC ACID EFFLUX PUMP SUBUNIT-RELATED"/>
    <property type="match status" value="1"/>
</dbReference>
<dbReference type="Pfam" id="PF04632">
    <property type="entry name" value="FUSC"/>
    <property type="match status" value="1"/>
</dbReference>
<keyword id="KW-0997">Cell inner membrane</keyword>
<keyword id="KW-1003">Cell membrane</keyword>
<keyword id="KW-0472">Membrane</keyword>
<keyword id="KW-0812">Transmembrane</keyword>
<keyword id="KW-1133">Transmembrane helix</keyword>
<keyword id="KW-0813">Transport</keyword>
<evidence type="ECO:0000255" key="1"/>
<evidence type="ECO:0000255" key="2">
    <source>
        <dbReference type="HAMAP-Rule" id="MF_01545"/>
    </source>
</evidence>
<protein>
    <recommendedName>
        <fullName evidence="2">p-hydroxybenzoic acid efflux pump subunit AaeB</fullName>
        <shortName evidence="2">pHBA efflux pump protein B</shortName>
    </recommendedName>
</protein>
<sequence>MGIFSIANQHIRFAVKLACAIVLALFIGFHFQLETPRWAVLTAAIVAAGPAFAAGGEPYSGAIRYRGMLRIIGTFIGCIAALIIIISMIRAPLLMILVCCVWAGFCTWISSLVRIENSYAWGLSGYTALIIVITIQTEPLLTPQFALERCSEIVIGIGCAILADLLFSPRSIKQEVDRELDCLLVAQYQLMQLCIKHGDSEEVDNAWGDLVRRTAALEGMRSNLNMESSRWVRANRRLKALNTLSLTLITQSCETYLIQNTRPELITDTFRELFETPVETVQDVHRQLKRMRRVIVWTGERETPVTLYSWVGAATRYLLLKRGVISNTKISATEEEILQGEPVVKVESAERHHAMVNFWRTTLSCILGTLFWLWTGWTSGNGAMVMIAVVTSLAMRLPNPRMVCIDFIYGTLAALPLGLLYFLVIIPNTQQSMLLLCLSLAVLGFFIGIEVQKRRLGSMGALASTINIIVLDNPMTFHFIQFLDSALGQIVGCMLAFIVILLVRDKSKDRTGRVLLNQFVSAAVSAMTTNVVRRKENRLPALYQQLFLLMNKFPGDLPKFRLALTMIIAHQRLRDAPIPVNEDLSVFHRQLRRTADHVISAGSDDKRRRYFGQLLDELDIYQEKLRIWEAPPQVTEPVKRLTGMLHKYQNALTDS</sequence>
<reference key="1">
    <citation type="journal article" date="2001" name="Nature">
        <title>Complete genome sequence of a multiple drug resistant Salmonella enterica serovar Typhi CT18.</title>
        <authorList>
            <person name="Parkhill J."/>
            <person name="Dougan G."/>
            <person name="James K.D."/>
            <person name="Thomson N.R."/>
            <person name="Pickard D."/>
            <person name="Wain J."/>
            <person name="Churcher C.M."/>
            <person name="Mungall K.L."/>
            <person name="Bentley S.D."/>
            <person name="Holden M.T.G."/>
            <person name="Sebaihia M."/>
            <person name="Baker S."/>
            <person name="Basham D."/>
            <person name="Brooks K."/>
            <person name="Chillingworth T."/>
            <person name="Connerton P."/>
            <person name="Cronin A."/>
            <person name="Davis P."/>
            <person name="Davies R.M."/>
            <person name="Dowd L."/>
            <person name="White N."/>
            <person name="Farrar J."/>
            <person name="Feltwell T."/>
            <person name="Hamlin N."/>
            <person name="Haque A."/>
            <person name="Hien T.T."/>
            <person name="Holroyd S."/>
            <person name="Jagels K."/>
            <person name="Krogh A."/>
            <person name="Larsen T.S."/>
            <person name="Leather S."/>
            <person name="Moule S."/>
            <person name="O'Gaora P."/>
            <person name="Parry C."/>
            <person name="Quail M.A."/>
            <person name="Rutherford K.M."/>
            <person name="Simmonds M."/>
            <person name="Skelton J."/>
            <person name="Stevens K."/>
            <person name="Whitehead S."/>
            <person name="Barrell B.G."/>
        </authorList>
    </citation>
    <scope>NUCLEOTIDE SEQUENCE [LARGE SCALE GENOMIC DNA]</scope>
    <source>
        <strain>CT18</strain>
    </source>
</reference>
<reference key="2">
    <citation type="journal article" date="2003" name="J. Bacteriol.">
        <title>Comparative genomics of Salmonella enterica serovar Typhi strains Ty2 and CT18.</title>
        <authorList>
            <person name="Deng W."/>
            <person name="Liou S.-R."/>
            <person name="Plunkett G. III"/>
            <person name="Mayhew G.F."/>
            <person name="Rose D.J."/>
            <person name="Burland V."/>
            <person name="Kodoyianni V."/>
            <person name="Schwartz D.C."/>
            <person name="Blattner F.R."/>
        </authorList>
    </citation>
    <scope>NUCLEOTIDE SEQUENCE [LARGE SCALE GENOMIC DNA]</scope>
    <source>
        <strain>ATCC 700931 / Ty2</strain>
    </source>
</reference>
<organism>
    <name type="scientific">Salmonella typhi</name>
    <dbReference type="NCBI Taxonomy" id="90370"/>
    <lineage>
        <taxon>Bacteria</taxon>
        <taxon>Pseudomonadati</taxon>
        <taxon>Pseudomonadota</taxon>
        <taxon>Gammaproteobacteria</taxon>
        <taxon>Enterobacterales</taxon>
        <taxon>Enterobacteriaceae</taxon>
        <taxon>Salmonella</taxon>
    </lineage>
</organism>
<name>AAEB_SALTI</name>